<dbReference type="EC" id="6.1.1.3" evidence="1"/>
<dbReference type="EMBL" id="AE014184">
    <property type="protein sequence ID" value="AAO44359.1"/>
    <property type="molecule type" value="Genomic_DNA"/>
</dbReference>
<dbReference type="RefSeq" id="WP_011102463.1">
    <property type="nucleotide sequence ID" value="NC_004572.3"/>
</dbReference>
<dbReference type="SMR" id="Q83GK5"/>
<dbReference type="STRING" id="203267.TWT_262"/>
<dbReference type="KEGG" id="twh:TWT_262"/>
<dbReference type="eggNOG" id="COG0441">
    <property type="taxonomic scope" value="Bacteria"/>
</dbReference>
<dbReference type="HOGENOM" id="CLU_008554_0_1_11"/>
<dbReference type="OrthoDB" id="9802304at2"/>
<dbReference type="Proteomes" id="UP000002200">
    <property type="component" value="Chromosome"/>
</dbReference>
<dbReference type="GO" id="GO:0005737">
    <property type="term" value="C:cytoplasm"/>
    <property type="evidence" value="ECO:0007669"/>
    <property type="project" value="UniProtKB-SubCell"/>
</dbReference>
<dbReference type="GO" id="GO:0005524">
    <property type="term" value="F:ATP binding"/>
    <property type="evidence" value="ECO:0007669"/>
    <property type="project" value="UniProtKB-UniRule"/>
</dbReference>
<dbReference type="GO" id="GO:0046872">
    <property type="term" value="F:metal ion binding"/>
    <property type="evidence" value="ECO:0007669"/>
    <property type="project" value="UniProtKB-KW"/>
</dbReference>
<dbReference type="GO" id="GO:0004829">
    <property type="term" value="F:threonine-tRNA ligase activity"/>
    <property type="evidence" value="ECO:0007669"/>
    <property type="project" value="UniProtKB-UniRule"/>
</dbReference>
<dbReference type="GO" id="GO:0000049">
    <property type="term" value="F:tRNA binding"/>
    <property type="evidence" value="ECO:0007669"/>
    <property type="project" value="UniProtKB-KW"/>
</dbReference>
<dbReference type="GO" id="GO:0006435">
    <property type="term" value="P:threonyl-tRNA aminoacylation"/>
    <property type="evidence" value="ECO:0007669"/>
    <property type="project" value="UniProtKB-UniRule"/>
</dbReference>
<dbReference type="CDD" id="cd00860">
    <property type="entry name" value="ThrRS_anticodon"/>
    <property type="match status" value="1"/>
</dbReference>
<dbReference type="CDD" id="cd00771">
    <property type="entry name" value="ThrRS_core"/>
    <property type="match status" value="1"/>
</dbReference>
<dbReference type="FunFam" id="3.30.930.10:FF:000019">
    <property type="entry name" value="Threonine--tRNA ligase"/>
    <property type="match status" value="1"/>
</dbReference>
<dbReference type="FunFam" id="3.30.980.10:FF:000005">
    <property type="entry name" value="Threonyl-tRNA synthetase, mitochondrial"/>
    <property type="match status" value="1"/>
</dbReference>
<dbReference type="Gene3D" id="3.30.54.20">
    <property type="match status" value="1"/>
</dbReference>
<dbReference type="Gene3D" id="3.40.50.800">
    <property type="entry name" value="Anticodon-binding domain"/>
    <property type="match status" value="1"/>
</dbReference>
<dbReference type="Gene3D" id="3.30.930.10">
    <property type="entry name" value="Bira Bifunctional Protein, Domain 2"/>
    <property type="match status" value="1"/>
</dbReference>
<dbReference type="Gene3D" id="3.30.980.10">
    <property type="entry name" value="Threonyl-trna Synthetase, Chain A, domain 2"/>
    <property type="match status" value="1"/>
</dbReference>
<dbReference type="HAMAP" id="MF_00184">
    <property type="entry name" value="Thr_tRNA_synth"/>
    <property type="match status" value="1"/>
</dbReference>
<dbReference type="InterPro" id="IPR002314">
    <property type="entry name" value="aa-tRNA-synt_IIb"/>
</dbReference>
<dbReference type="InterPro" id="IPR006195">
    <property type="entry name" value="aa-tRNA-synth_II"/>
</dbReference>
<dbReference type="InterPro" id="IPR045864">
    <property type="entry name" value="aa-tRNA-synth_II/BPL/LPL"/>
</dbReference>
<dbReference type="InterPro" id="IPR004154">
    <property type="entry name" value="Anticodon-bd"/>
</dbReference>
<dbReference type="InterPro" id="IPR036621">
    <property type="entry name" value="Anticodon-bd_dom_sf"/>
</dbReference>
<dbReference type="InterPro" id="IPR002320">
    <property type="entry name" value="Thr-tRNA-ligase_IIa"/>
</dbReference>
<dbReference type="InterPro" id="IPR018163">
    <property type="entry name" value="Thr/Ala-tRNA-synth_IIc_edit"/>
</dbReference>
<dbReference type="InterPro" id="IPR047246">
    <property type="entry name" value="ThrRS_anticodon"/>
</dbReference>
<dbReference type="InterPro" id="IPR033728">
    <property type="entry name" value="ThrRS_core"/>
</dbReference>
<dbReference type="InterPro" id="IPR012947">
    <property type="entry name" value="tRNA_SAD"/>
</dbReference>
<dbReference type="NCBIfam" id="TIGR00418">
    <property type="entry name" value="thrS"/>
    <property type="match status" value="1"/>
</dbReference>
<dbReference type="PANTHER" id="PTHR11451:SF44">
    <property type="entry name" value="THREONINE--TRNA LIGASE, CHLOROPLASTIC_MITOCHONDRIAL 2"/>
    <property type="match status" value="1"/>
</dbReference>
<dbReference type="PANTHER" id="PTHR11451">
    <property type="entry name" value="THREONINE-TRNA LIGASE"/>
    <property type="match status" value="1"/>
</dbReference>
<dbReference type="Pfam" id="PF03129">
    <property type="entry name" value="HGTP_anticodon"/>
    <property type="match status" value="1"/>
</dbReference>
<dbReference type="Pfam" id="PF00587">
    <property type="entry name" value="tRNA-synt_2b"/>
    <property type="match status" value="1"/>
</dbReference>
<dbReference type="Pfam" id="PF07973">
    <property type="entry name" value="tRNA_SAD"/>
    <property type="match status" value="1"/>
</dbReference>
<dbReference type="PRINTS" id="PR01047">
    <property type="entry name" value="TRNASYNTHTHR"/>
</dbReference>
<dbReference type="SMART" id="SM00863">
    <property type="entry name" value="tRNA_SAD"/>
    <property type="match status" value="1"/>
</dbReference>
<dbReference type="SUPFAM" id="SSF52954">
    <property type="entry name" value="Class II aaRS ABD-related"/>
    <property type="match status" value="1"/>
</dbReference>
<dbReference type="SUPFAM" id="SSF55681">
    <property type="entry name" value="Class II aaRS and biotin synthetases"/>
    <property type="match status" value="1"/>
</dbReference>
<dbReference type="SUPFAM" id="SSF55186">
    <property type="entry name" value="ThrRS/AlaRS common domain"/>
    <property type="match status" value="1"/>
</dbReference>
<dbReference type="PROSITE" id="PS50862">
    <property type="entry name" value="AA_TRNA_LIGASE_II"/>
    <property type="match status" value="1"/>
</dbReference>
<organism>
    <name type="scientific">Tropheryma whipplei (strain Twist)</name>
    <name type="common">Whipple's bacillus</name>
    <dbReference type="NCBI Taxonomy" id="203267"/>
    <lineage>
        <taxon>Bacteria</taxon>
        <taxon>Bacillati</taxon>
        <taxon>Actinomycetota</taxon>
        <taxon>Actinomycetes</taxon>
        <taxon>Micrococcales</taxon>
        <taxon>Tropherymataceae</taxon>
        <taxon>Tropheryma</taxon>
    </lineage>
</organism>
<proteinExistence type="inferred from homology"/>
<keyword id="KW-0030">Aminoacyl-tRNA synthetase</keyword>
<keyword id="KW-0067">ATP-binding</keyword>
<keyword id="KW-0963">Cytoplasm</keyword>
<keyword id="KW-0436">Ligase</keyword>
<keyword id="KW-0479">Metal-binding</keyword>
<keyword id="KW-0547">Nucleotide-binding</keyword>
<keyword id="KW-0648">Protein biosynthesis</keyword>
<keyword id="KW-1185">Reference proteome</keyword>
<keyword id="KW-0694">RNA-binding</keyword>
<keyword id="KW-0820">tRNA-binding</keyword>
<keyword id="KW-0862">Zinc</keyword>
<reference key="1">
    <citation type="journal article" date="2003" name="Genome Res.">
        <title>Tropheryma whipplei twist: a human pathogenic Actinobacteria with a reduced genome.</title>
        <authorList>
            <person name="Raoult D."/>
            <person name="Ogata H."/>
            <person name="Audic S."/>
            <person name="Robert C."/>
            <person name="Suhre K."/>
            <person name="Drancourt M."/>
            <person name="Claverie J.-M."/>
        </authorList>
    </citation>
    <scope>NUCLEOTIDE SEQUENCE [LARGE SCALE GENOMIC DNA]</scope>
    <source>
        <strain>Twist</strain>
    </source>
</reference>
<feature type="chain" id="PRO_0000101080" description="Threonine--tRNA ligase">
    <location>
        <begin position="1"/>
        <end position="640"/>
    </location>
</feature>
<feature type="region of interest" description="Catalytic" evidence="1">
    <location>
        <begin position="224"/>
        <end position="525"/>
    </location>
</feature>
<feature type="binding site" evidence="1">
    <location>
        <position position="323"/>
    </location>
    <ligand>
        <name>Zn(2+)</name>
        <dbReference type="ChEBI" id="CHEBI:29105"/>
    </ligand>
</feature>
<feature type="binding site" evidence="1">
    <location>
        <position position="374"/>
    </location>
    <ligand>
        <name>Zn(2+)</name>
        <dbReference type="ChEBI" id="CHEBI:29105"/>
    </ligand>
</feature>
<feature type="binding site" evidence="1">
    <location>
        <position position="502"/>
    </location>
    <ligand>
        <name>Zn(2+)</name>
        <dbReference type="ChEBI" id="CHEBI:29105"/>
    </ligand>
</feature>
<sequence length="640" mass="73126">MDGFEFFSGRSDVVAMICDDRLLDLSESIPSGKVPEPIELDSPHGLDILRHSCAHVLAQAVQSIYGDAKLGIGPFTENGFYYDFSVNEPFSSDSLRVIEDKMREIVHSDQKFVRKVVDRQSAHSQFRDEPFKLEIINATDDTLSIYYNIDADSGSVRWMDFCRGPHLPSTRFIGDAFALTHVSSVYWRGNSDNPQMQRVYGTAWGSAKDLKGYLDRVELAKLVDHRKLGKELDLFSLPDEIGPGLALFHVKGGIIRSEMEQYARLRHLEEGYNFVYSPHITKRDLFERSGHLQWYGQSMFPPMRLDKDSCSQGFDYYLKPMNCPFHSLVFSSQPRSYRQLPLRLAEFGTVYRYEQSGAIHGLARVRGLTQDDAHIYATRESFEDEVSKALQFTISLLGDYGLDQFYIEISTRDASGKFLGSDEDWAYATHILQKVAQDSGLQTRDDPGGAAFYGPKISVQAKDAIGRYWQMSTIQLDFNLPERFGLFYTDRAGERKRPIMVHRALFGSFERFFAVLTEHYAGAFPPWLSPEQVVALPVTSAHIPYLEEFVSRFSSRLIRARVDYMQDRLPKKIRSYVKEKIPFVLVAGDRDLTNRTVAIRFRDGTQISDLPIQKCFDGICASIDRKKQIQTRIDFDSVLE</sequence>
<evidence type="ECO:0000255" key="1">
    <source>
        <dbReference type="HAMAP-Rule" id="MF_00184"/>
    </source>
</evidence>
<protein>
    <recommendedName>
        <fullName evidence="1">Threonine--tRNA ligase</fullName>
        <ecNumber evidence="1">6.1.1.3</ecNumber>
    </recommendedName>
    <alternativeName>
        <fullName evidence="1">Threonyl-tRNA synthetase</fullName>
        <shortName evidence="1">ThrRS</shortName>
    </alternativeName>
</protein>
<comment type="function">
    <text evidence="1">Catalyzes the attachment of threonine to tRNA(Thr) in a two-step reaction: L-threonine is first activated by ATP to form Thr-AMP and then transferred to the acceptor end of tRNA(Thr). Also edits incorrectly charged L-seryl-tRNA(Thr).</text>
</comment>
<comment type="catalytic activity">
    <reaction evidence="1">
        <text>tRNA(Thr) + L-threonine + ATP = L-threonyl-tRNA(Thr) + AMP + diphosphate + H(+)</text>
        <dbReference type="Rhea" id="RHEA:24624"/>
        <dbReference type="Rhea" id="RHEA-COMP:9670"/>
        <dbReference type="Rhea" id="RHEA-COMP:9704"/>
        <dbReference type="ChEBI" id="CHEBI:15378"/>
        <dbReference type="ChEBI" id="CHEBI:30616"/>
        <dbReference type="ChEBI" id="CHEBI:33019"/>
        <dbReference type="ChEBI" id="CHEBI:57926"/>
        <dbReference type="ChEBI" id="CHEBI:78442"/>
        <dbReference type="ChEBI" id="CHEBI:78534"/>
        <dbReference type="ChEBI" id="CHEBI:456215"/>
        <dbReference type="EC" id="6.1.1.3"/>
    </reaction>
</comment>
<comment type="cofactor">
    <cofactor evidence="1">
        <name>Zn(2+)</name>
        <dbReference type="ChEBI" id="CHEBI:29105"/>
    </cofactor>
    <text evidence="1">Binds 1 zinc ion per subunit.</text>
</comment>
<comment type="subunit">
    <text evidence="1">Homodimer.</text>
</comment>
<comment type="subcellular location">
    <subcellularLocation>
        <location evidence="1">Cytoplasm</location>
    </subcellularLocation>
</comment>
<comment type="similarity">
    <text evidence="1">Belongs to the class-II aminoacyl-tRNA synthetase family.</text>
</comment>
<name>SYT_TROWT</name>
<accession>Q83GK5</accession>
<gene>
    <name evidence="1" type="primary">thrS</name>
    <name type="ordered locus">TWT_262</name>
</gene>